<proteinExistence type="inferred from homology"/>
<dbReference type="EMBL" id="CP000880">
    <property type="protein sequence ID" value="ABX21911.1"/>
    <property type="molecule type" value="Genomic_DNA"/>
</dbReference>
<dbReference type="SMR" id="A9MIK8"/>
<dbReference type="STRING" id="41514.SARI_02032"/>
<dbReference type="KEGG" id="ses:SARI_02032"/>
<dbReference type="HOGENOM" id="CLU_117144_3_0_6"/>
<dbReference type="Proteomes" id="UP000002084">
    <property type="component" value="Chromosome"/>
</dbReference>
<dbReference type="Gene3D" id="3.30.110.70">
    <property type="entry name" value="Hypothetical protein apc22750. Chain B"/>
    <property type="match status" value="1"/>
</dbReference>
<dbReference type="HAMAP" id="MF_00338">
    <property type="entry name" value="UPF0145"/>
    <property type="match status" value="1"/>
</dbReference>
<dbReference type="InterPro" id="IPR035439">
    <property type="entry name" value="UPF0145_dom_sf"/>
</dbReference>
<dbReference type="InterPro" id="IPR002765">
    <property type="entry name" value="UPF0145_YbjQ-like"/>
</dbReference>
<dbReference type="NCBIfam" id="NF002776">
    <property type="entry name" value="PRK02877.1"/>
    <property type="match status" value="1"/>
</dbReference>
<dbReference type="PANTHER" id="PTHR34068">
    <property type="entry name" value="UPF0145 PROTEIN YBJQ"/>
    <property type="match status" value="1"/>
</dbReference>
<dbReference type="PANTHER" id="PTHR34068:SF1">
    <property type="entry name" value="UPF0145 PROTEIN YBJQ"/>
    <property type="match status" value="1"/>
</dbReference>
<dbReference type="Pfam" id="PF01906">
    <property type="entry name" value="YbjQ_1"/>
    <property type="match status" value="1"/>
</dbReference>
<dbReference type="SUPFAM" id="SSF117782">
    <property type="entry name" value="YbjQ-like"/>
    <property type="match status" value="1"/>
</dbReference>
<reference key="1">
    <citation type="submission" date="2007-11" db="EMBL/GenBank/DDBJ databases">
        <authorList>
            <consortium name="The Salmonella enterica serovar Arizonae Genome Sequencing Project"/>
            <person name="McClelland M."/>
            <person name="Sanderson E.K."/>
            <person name="Porwollik S."/>
            <person name="Spieth J."/>
            <person name="Clifton W.S."/>
            <person name="Fulton R."/>
            <person name="Chunyan W."/>
            <person name="Wollam A."/>
            <person name="Shah N."/>
            <person name="Pepin K."/>
            <person name="Bhonagiri V."/>
            <person name="Nash W."/>
            <person name="Johnson M."/>
            <person name="Thiruvilangam P."/>
            <person name="Wilson R."/>
        </authorList>
    </citation>
    <scope>NUCLEOTIDE SEQUENCE [LARGE SCALE GENOMIC DNA]</scope>
    <source>
        <strain>ATCC BAA-731 / CDC346-86 / RSK2980</strain>
    </source>
</reference>
<protein>
    <recommendedName>
        <fullName evidence="1">UPF0145 protein YbjQ</fullName>
    </recommendedName>
</protein>
<name>YBJQ_SALAR</name>
<feature type="chain" id="PRO_1000079305" description="UPF0145 protein YbjQ">
    <location>
        <begin position="1"/>
        <end position="107"/>
    </location>
</feature>
<comment type="similarity">
    <text evidence="1">Belongs to the UPF0145 family.</text>
</comment>
<gene>
    <name evidence="1" type="primary">ybjQ</name>
    <name type="ordered locus">SARI_02032</name>
</gene>
<keyword id="KW-1185">Reference proteome</keyword>
<sequence>MQFSTTPTLEGQSIVEYCGVVTGEAILGANIFRDFFAGIRDIVGGRSGAYEKELRKAREIAFQELGEQAKALGADAVVGIDIDYETVGKDGSMLMVSVSGTAVKTRR</sequence>
<evidence type="ECO:0000255" key="1">
    <source>
        <dbReference type="HAMAP-Rule" id="MF_00338"/>
    </source>
</evidence>
<accession>A9MIK8</accession>
<organism>
    <name type="scientific">Salmonella arizonae (strain ATCC BAA-731 / CDC346-86 / RSK2980)</name>
    <dbReference type="NCBI Taxonomy" id="41514"/>
    <lineage>
        <taxon>Bacteria</taxon>
        <taxon>Pseudomonadati</taxon>
        <taxon>Pseudomonadota</taxon>
        <taxon>Gammaproteobacteria</taxon>
        <taxon>Enterobacterales</taxon>
        <taxon>Enterobacteriaceae</taxon>
        <taxon>Salmonella</taxon>
    </lineage>
</organism>